<proteinExistence type="inferred from homology"/>
<sequence length="193" mass="21140">MRLCDRDIEAWLDSGKLGIEPRPPVERINGATVDVRLGNQFRVFRGHTAAFIDLSGPKDEVSAALERVMSDEINLPEGEAFFLHPGELALAVTLESVTIPDDLVGWLDGRSSLARLGLMVHVTAHRIDPGWQGRIVLEFYNSGKLPLALRPGMLIGALSFEPLSGPAARPYNSRQDAKYRGQQGAVASRIDKD</sequence>
<protein>
    <recommendedName>
        <fullName evidence="1">dCTP deaminase</fullName>
        <ecNumber evidence="1">3.5.4.13</ecNumber>
    </recommendedName>
    <alternativeName>
        <fullName evidence="1">Deoxycytidine triphosphate deaminase</fullName>
    </alternativeName>
</protein>
<gene>
    <name evidence="1" type="primary">dcd</name>
    <name type="ordered locus">YPDSF_1451</name>
</gene>
<dbReference type="EC" id="3.5.4.13" evidence="1"/>
<dbReference type="EMBL" id="CP000668">
    <property type="protein sequence ID" value="ABP39838.1"/>
    <property type="molecule type" value="Genomic_DNA"/>
</dbReference>
<dbReference type="RefSeq" id="WP_002211873.1">
    <property type="nucleotide sequence ID" value="NZ_CP009715.1"/>
</dbReference>
<dbReference type="SMR" id="A4TKM6"/>
<dbReference type="GeneID" id="96665144"/>
<dbReference type="KEGG" id="ypp:YPDSF_1451"/>
<dbReference type="PATRIC" id="fig|386656.14.peg.2332"/>
<dbReference type="UniPathway" id="UPA00610">
    <property type="reaction ID" value="UER00665"/>
</dbReference>
<dbReference type="GO" id="GO:0008829">
    <property type="term" value="F:dCTP deaminase activity"/>
    <property type="evidence" value="ECO:0007669"/>
    <property type="project" value="UniProtKB-UniRule"/>
</dbReference>
<dbReference type="GO" id="GO:0000166">
    <property type="term" value="F:nucleotide binding"/>
    <property type="evidence" value="ECO:0007669"/>
    <property type="project" value="UniProtKB-KW"/>
</dbReference>
<dbReference type="GO" id="GO:0006226">
    <property type="term" value="P:dUMP biosynthetic process"/>
    <property type="evidence" value="ECO:0007669"/>
    <property type="project" value="UniProtKB-UniPathway"/>
</dbReference>
<dbReference type="GO" id="GO:0006229">
    <property type="term" value="P:dUTP biosynthetic process"/>
    <property type="evidence" value="ECO:0007669"/>
    <property type="project" value="UniProtKB-UniRule"/>
</dbReference>
<dbReference type="GO" id="GO:0015949">
    <property type="term" value="P:nucleobase-containing small molecule interconversion"/>
    <property type="evidence" value="ECO:0007669"/>
    <property type="project" value="TreeGrafter"/>
</dbReference>
<dbReference type="CDD" id="cd07557">
    <property type="entry name" value="trimeric_dUTPase"/>
    <property type="match status" value="1"/>
</dbReference>
<dbReference type="FunFam" id="2.70.40.10:FF:000003">
    <property type="entry name" value="dCTP deaminase"/>
    <property type="match status" value="1"/>
</dbReference>
<dbReference type="Gene3D" id="2.70.40.10">
    <property type="match status" value="1"/>
</dbReference>
<dbReference type="HAMAP" id="MF_00146">
    <property type="entry name" value="dCTP_deaminase"/>
    <property type="match status" value="1"/>
</dbReference>
<dbReference type="InterPro" id="IPR011962">
    <property type="entry name" value="dCTP_deaminase"/>
</dbReference>
<dbReference type="InterPro" id="IPR036157">
    <property type="entry name" value="dUTPase-like_sf"/>
</dbReference>
<dbReference type="InterPro" id="IPR033704">
    <property type="entry name" value="dUTPase_trimeric"/>
</dbReference>
<dbReference type="NCBIfam" id="TIGR02274">
    <property type="entry name" value="dCTP_deam"/>
    <property type="match status" value="1"/>
</dbReference>
<dbReference type="PANTHER" id="PTHR42680">
    <property type="entry name" value="DCTP DEAMINASE"/>
    <property type="match status" value="1"/>
</dbReference>
<dbReference type="PANTHER" id="PTHR42680:SF3">
    <property type="entry name" value="DCTP DEAMINASE"/>
    <property type="match status" value="1"/>
</dbReference>
<dbReference type="Pfam" id="PF22769">
    <property type="entry name" value="DCD"/>
    <property type="match status" value="1"/>
</dbReference>
<dbReference type="SUPFAM" id="SSF51283">
    <property type="entry name" value="dUTPase-like"/>
    <property type="match status" value="1"/>
</dbReference>
<feature type="chain" id="PRO_1000009836" description="dCTP deaminase">
    <location>
        <begin position="1"/>
        <end position="193"/>
    </location>
</feature>
<feature type="region of interest" description="Disordered" evidence="2">
    <location>
        <begin position="169"/>
        <end position="193"/>
    </location>
</feature>
<feature type="active site" description="Proton donor/acceptor" evidence="1">
    <location>
        <position position="138"/>
    </location>
</feature>
<feature type="binding site" evidence="1">
    <location>
        <begin position="110"/>
        <end position="115"/>
    </location>
    <ligand>
        <name>dCTP</name>
        <dbReference type="ChEBI" id="CHEBI:61481"/>
    </ligand>
</feature>
<feature type="binding site" evidence="1">
    <location>
        <position position="128"/>
    </location>
    <ligand>
        <name>dCTP</name>
        <dbReference type="ChEBI" id="CHEBI:61481"/>
    </ligand>
</feature>
<feature type="binding site" evidence="1">
    <location>
        <begin position="136"/>
        <end position="138"/>
    </location>
    <ligand>
        <name>dCTP</name>
        <dbReference type="ChEBI" id="CHEBI:61481"/>
    </ligand>
</feature>
<feature type="binding site" evidence="1">
    <location>
        <position position="171"/>
    </location>
    <ligand>
        <name>dCTP</name>
        <dbReference type="ChEBI" id="CHEBI:61481"/>
    </ligand>
</feature>
<feature type="binding site" evidence="1">
    <location>
        <position position="178"/>
    </location>
    <ligand>
        <name>dCTP</name>
        <dbReference type="ChEBI" id="CHEBI:61481"/>
    </ligand>
</feature>
<feature type="binding site" evidence="1">
    <location>
        <position position="182"/>
    </location>
    <ligand>
        <name>dCTP</name>
        <dbReference type="ChEBI" id="CHEBI:61481"/>
    </ligand>
</feature>
<evidence type="ECO:0000255" key="1">
    <source>
        <dbReference type="HAMAP-Rule" id="MF_00146"/>
    </source>
</evidence>
<evidence type="ECO:0000256" key="2">
    <source>
        <dbReference type="SAM" id="MobiDB-lite"/>
    </source>
</evidence>
<reference key="1">
    <citation type="submission" date="2007-02" db="EMBL/GenBank/DDBJ databases">
        <title>Complete sequence of chromosome of Yersinia pestis Pestoides F.</title>
        <authorList>
            <consortium name="US DOE Joint Genome Institute"/>
            <person name="Copeland A."/>
            <person name="Lucas S."/>
            <person name="Lapidus A."/>
            <person name="Barry K."/>
            <person name="Detter J.C."/>
            <person name="Glavina del Rio T."/>
            <person name="Hammon N."/>
            <person name="Israni S."/>
            <person name="Dalin E."/>
            <person name="Tice H."/>
            <person name="Pitluck S."/>
            <person name="Di Bartolo G."/>
            <person name="Chain P."/>
            <person name="Malfatti S."/>
            <person name="Shin M."/>
            <person name="Vergez L."/>
            <person name="Schmutz J."/>
            <person name="Larimer F."/>
            <person name="Land M."/>
            <person name="Hauser L."/>
            <person name="Worsham P."/>
            <person name="Chu M."/>
            <person name="Bearden S."/>
            <person name="Garcia E."/>
            <person name="Richardson P."/>
        </authorList>
    </citation>
    <scope>NUCLEOTIDE SEQUENCE [LARGE SCALE GENOMIC DNA]</scope>
    <source>
        <strain>Pestoides F</strain>
    </source>
</reference>
<name>DCD_YERPP</name>
<organism>
    <name type="scientific">Yersinia pestis (strain Pestoides F)</name>
    <dbReference type="NCBI Taxonomy" id="386656"/>
    <lineage>
        <taxon>Bacteria</taxon>
        <taxon>Pseudomonadati</taxon>
        <taxon>Pseudomonadota</taxon>
        <taxon>Gammaproteobacteria</taxon>
        <taxon>Enterobacterales</taxon>
        <taxon>Yersiniaceae</taxon>
        <taxon>Yersinia</taxon>
    </lineage>
</organism>
<keyword id="KW-0378">Hydrolase</keyword>
<keyword id="KW-0546">Nucleotide metabolism</keyword>
<keyword id="KW-0547">Nucleotide-binding</keyword>
<comment type="function">
    <text evidence="1">Catalyzes the deamination of dCTP to dUTP.</text>
</comment>
<comment type="catalytic activity">
    <reaction evidence="1">
        <text>dCTP + H2O + H(+) = dUTP + NH4(+)</text>
        <dbReference type="Rhea" id="RHEA:22680"/>
        <dbReference type="ChEBI" id="CHEBI:15377"/>
        <dbReference type="ChEBI" id="CHEBI:15378"/>
        <dbReference type="ChEBI" id="CHEBI:28938"/>
        <dbReference type="ChEBI" id="CHEBI:61481"/>
        <dbReference type="ChEBI" id="CHEBI:61555"/>
        <dbReference type="EC" id="3.5.4.13"/>
    </reaction>
</comment>
<comment type="pathway">
    <text evidence="1">Pyrimidine metabolism; dUMP biosynthesis; dUMP from dCTP (dUTP route): step 1/2.</text>
</comment>
<comment type="subunit">
    <text evidence="1">Homotrimer.</text>
</comment>
<comment type="similarity">
    <text evidence="1">Belongs to the dCTP deaminase family.</text>
</comment>
<accession>A4TKM6</accession>